<evidence type="ECO:0000250" key="1">
    <source>
        <dbReference type="UniProtKB" id="P18074"/>
    </source>
</evidence>
<evidence type="ECO:0000250" key="2">
    <source>
        <dbReference type="UniProtKB" id="Q6AXC6"/>
    </source>
</evidence>
<evidence type="ECO:0000255" key="3">
    <source>
        <dbReference type="PROSITE-ProRule" id="PRU00541"/>
    </source>
</evidence>
<evidence type="ECO:0000256" key="4">
    <source>
        <dbReference type="SAM" id="MobiDB-lite"/>
    </source>
</evidence>
<evidence type="ECO:0000269" key="5">
    <source>
    </source>
</evidence>
<evidence type="ECO:0000269" key="6">
    <source>
    </source>
</evidence>
<evidence type="ECO:0000269" key="7">
    <source>
    </source>
</evidence>
<evidence type="ECO:0000269" key="8">
    <source>
    </source>
</evidence>
<evidence type="ECO:0000269" key="9">
    <source>
    </source>
</evidence>
<evidence type="ECO:0000269" key="10">
    <source>
    </source>
</evidence>
<evidence type="ECO:0000269" key="11">
    <source>
    </source>
</evidence>
<evidence type="ECO:0000269" key="12">
    <source>
    </source>
</evidence>
<evidence type="ECO:0000269" key="13">
    <source>
    </source>
</evidence>
<evidence type="ECO:0000269" key="14">
    <source>
    </source>
</evidence>
<evidence type="ECO:0000269" key="15">
    <source>
    </source>
</evidence>
<evidence type="ECO:0000269" key="16">
    <source>
    </source>
</evidence>
<evidence type="ECO:0000269" key="17">
    <source>
    </source>
</evidence>
<evidence type="ECO:0000269" key="18">
    <source>
    </source>
</evidence>
<evidence type="ECO:0000269" key="19">
    <source>
    </source>
</evidence>
<evidence type="ECO:0000269" key="20">
    <source>
    </source>
</evidence>
<evidence type="ECO:0000269" key="21">
    <source>
    </source>
</evidence>
<evidence type="ECO:0000269" key="22">
    <source ref="3"/>
</evidence>
<evidence type="ECO:0000303" key="23">
    <source>
    </source>
</evidence>
<evidence type="ECO:0000303" key="24">
    <source>
    </source>
</evidence>
<evidence type="ECO:0000303" key="25">
    <source>
    </source>
</evidence>
<evidence type="ECO:0000303" key="26">
    <source ref="3"/>
</evidence>
<evidence type="ECO:0000305" key="27"/>
<evidence type="ECO:0000312" key="28">
    <source>
        <dbReference type="HGNC" id="HGNC:2736"/>
    </source>
</evidence>
<evidence type="ECO:0007744" key="29">
    <source>
    </source>
</evidence>
<sequence length="970" mass="108313">MANETQKVGAIHFPFPFTPYSIQEDFMAELYRVLEAGKIGIFESPTGTGKSLSLICGALSWLRDFEQKKREEEARLLETGTGPLHDEKDESLCLSSSCEGAAGTPRPAGEPAWVTQFVQKKEERDLVDRLKAEQARRKQREERLQQLQHRVQLKYAAKRLRQEEEERENLLRLSREMLETGPEAERLEQLESGEEELVLAEYESDEEKKVASRVDEDEDDLEEEHITKIYYCSRTHSQLAQFVHEVKKSPFGKDVRLVSLGSRQNLCVNEDVKSLGSVQLINDRCVDMQRSRHEKKKGAEEEKPKRRRQEKQAACPFYNHEQMGLLRDEALAEVKDMEQLLALGKEARACPYYGSRLAIPAAQLVVLPYQMLLHAATRQAAGIRLQDQVVIIDEAHNLIDTITGMHSVEVSGSQLCQAHSQLLQYVERYGKRLKAKNLMYLKQILYLLEKFVAVLGGNIKQNPNTQSLSQTGTELKTINDFLFQSQIDNINLFKVQRYCEKSMISRKLFGFTERYGAVFSSREQPKLAGFQQFLQSLQPRTTEALAAPADESQASTLRPASPLMHIQGFLAALTTANQDGRVILSRQGSLSQSTLKFLLLNPAVHFAQVVKECRAVVIAGGTMQPVSDFRQQLLACAGVEAERVVEFSCGHVIPPDNILPLVICSGISNQPLEFTFQKRELPQMMDEVGRILCNLCGVVPGGVVCFFPSYEYLRQVHAHWEKGGLLGRLAARKKIFQEPKSAHQVEQVLLAYSRCIQACGQERGQVTGALLLSVVGGKMSEGINFSDNLGRCVVMVGMPFPNIRSAELQEKMAYLDQTLSPRPGTPREGSGGEPVHEGRQPVHRQGHQAPEGFCQRSAPGPAICPAPCPGQAAGLDPSPCGGQSYLWPRHCCCAEVSPGEVGLFLMGNHTTAWRRALPLSCPLETVFVVGVVCGDPVTKVKPRRRVWSPECCQDPGTGVSSRRRKWGNPE</sequence>
<comment type="function">
    <text evidence="2 5 6 8 9 11 12 14 15 16 17 18">DNA-dependent ATPase and ATP-dependent DNA helicase that participates in various functions in genomic stability, including DNA replication, DNA repair and heterochromatin organization as well as in ribosomal RNA synthesis (PubMed:10648783, PubMed:21854770, PubMed:23797032, PubMed:26089203, PubMed:26503245). Its double-stranded DNA helicase activity requires either a minimal 5'-single-stranded tail length of approximately 15 nt (flap substrates) or 10 nt length single-stranded gapped DNA substrates of a partial duplex DNA structure for helicase loading and translocation along DNA in a 5' to 3' direction (PubMed:10648783, PubMed:18499658, PubMed:22102414). The helicase activity is capable of displacing duplex regions up to 100 bp, which can be extended up to 500 bp by the replication protein A (RPA) or the cohesion CTF18-replication factor C (Ctf18-RFC) complex activities (PubMed:18499658). Also shows ATPase- and helicase activities on substrates that mimic key DNA intermediates of replication, repair and homologous recombination reactions, including forked duplex, anti-parallel G-quadruplex and three-stranded D-loop DNA molecules (PubMed:22102414, PubMed:26503245). Plays a role in DNA double-strand break (DSB) repair at the DNA replication fork during DNA replication recovery from DNA damage (PubMed:23797032). Recruited with TIMELESS factor upon DNA-replication stress response at DNA replication fork to preserve replication fork progression, and hence ensure DNA replication fidelity (PubMed:26503245). Also cooperates with TIMELESS factor during DNA replication to regulate proper sister chromatid cohesion and mitotic chromosome segregation (PubMed:17105772, PubMed:18499658, PubMed:20124417, PubMed:23116066, PubMed:23797032). Stimulates 5'-single-stranded DNA flap endonuclease activity of FEN1 in an ATP- and helicase-independent manner; and hence it may contribute in Okazaki fragment processing at DNA replication fork during lagging strand DNA synthesis (PubMed:18499658). Its ability to function at DNA replication fork is modulated by its binding to long non-coding RNA (lncRNA) cohesion regulator non-coding RNA DDX11-AS1/CONCR, which is able to increase both DDX11 ATPase activity and binding to DNA replicating regions (PubMed:27477908). Also plays a role in heterochromatin organization (PubMed:21854770). Involved in rRNA transcription activation through binding to active hypomethylated rDNA gene loci by recruiting UBTF and the RNA polymerase Pol I transcriptional machinery (PubMed:26089203). Plays a role in embryonic development and prevention of aneuploidy (By similarity). Involved in melanoma cell proliferation and survival (PubMed:23116066). Associates with chromatin at DNA replication fork regions (PubMed:27477908). Binds to single- and double-stranded DNAs (PubMed:18499658, PubMed:22102414, PubMed:9013641).</text>
</comment>
<comment type="function">
    <text evidence="7">(Microbial infection) Required for bovine papillomavirus type 1 regulatory protein E2 loading onto mitotic chromosomes during DNA replication for the viral genome to be maintained and segregated.</text>
</comment>
<comment type="catalytic activity">
    <reaction evidence="5 8 12">
        <text>Couples ATP hydrolysis with the unwinding of duplex DNA at the replication fork by translocating in the 5'-3' direction. This creates two antiparallel DNA single strands (ssDNA). The leading ssDNA polymer is the template for DNA polymerase III holoenzyme which synthesizes a continuous strand.</text>
        <dbReference type="EC" id="5.6.2.3"/>
    </reaction>
</comment>
<comment type="catalytic activity">
    <reaction evidence="5 8 12 16 18">
        <text>ATP + H2O = ADP + phosphate + H(+)</text>
        <dbReference type="Rhea" id="RHEA:13065"/>
        <dbReference type="ChEBI" id="CHEBI:15377"/>
        <dbReference type="ChEBI" id="CHEBI:15378"/>
        <dbReference type="ChEBI" id="CHEBI:30616"/>
        <dbReference type="ChEBI" id="CHEBI:43474"/>
        <dbReference type="ChEBI" id="CHEBI:456216"/>
        <dbReference type="EC" id="5.6.2.3"/>
    </reaction>
</comment>
<comment type="cofactor">
    <cofactor evidence="5">
        <name>Mg(2+)</name>
        <dbReference type="ChEBI" id="CHEBI:18420"/>
    </cofactor>
    <text evidence="5 8">Both helicase and DNA-dependent ATPase activities are maximal in the presence of Mg(2+); Mn(2+) and Ca(2+) but not Zn(2+) will substitute in vitro (PubMed:10648783).</text>
</comment>
<comment type="cofactor">
    <cofactor evidence="1">
        <name>[4Fe-4S] cluster</name>
        <dbReference type="ChEBI" id="CHEBI:49883"/>
    </cofactor>
    <text evidence="1">Binds 1 [4Fe-4S] cluster.</text>
</comment>
<comment type="activity regulation">
    <text evidence="5 8 18">ATPase activity is stimulated by high magnesium salt levels (up to a 0.1 M), and potassium salts (glutamate, chloride or acetate) are more effective than the corresponding sodium salts (PubMed:10648783, PubMed:18499658). ATPase activity is enhanced by the long non-coding RNA (lncRNA) cohesion regulator noncoding RNA (CONCR) (PubMed:27477908). Double-stranded DNA helicase activity is maximal with magnesium ions at low concentrations (0.5-1 mM) whereas is markedly inhibited at higher levels (5 mM and above) (PubMed:10648783, PubMed:18499658). Double-stranded DNA helicase activity is stimulated by 25-50 mM potassium acetate, stimulated to a lesser extent by 25 mM of ammonium acetate, and markedly inhibited by sodium acetate (PubMed:18499658).</text>
</comment>
<comment type="biophysicochemical properties">
    <kinetics>
        <KM evidence="12">0.588 mM for ATP</KM>
    </kinetics>
    <phDependence>
        <text evidence="5">Optimum pH is 7.4 for DNA-dependent ATPase activity (PubMed:10648783).</text>
    </phDependence>
</comment>
<comment type="subunit">
    <text evidence="6 8 9 16 17 19">Associates with the CTF18-RFC complex (PubMed:18499658). Associates with a cohesin complex composed of RAD21, SMC1 proteins and SMC3 (PubMed:17105772). Interacts with CHTF18 (PubMed:18499658). Interacts with DSCC1 (PubMed:18499658). Interacts with FEN1; this interaction is direct and increases flap endonuclease activity of FEN1 (PubMed:18499658). Interacts with PCNA (PubMed:18499658). Interacts with POLR1A and UBTF (PubMed:26089203). Interacts with RAD21, SMC1 proteins and SMC3 (PubMed:17105772). Interacts with RFC2 (PubMed:18499658). Interacts with TIMELESS; this interaction increases recruitment of both proteins onto chromatin in response to replication stress induction by hydroxyurea (PubMed:20124417, PubMed:26503245).</text>
</comment>
<comment type="subunit">
    <text evidence="7">(Microbial infection) Interacts with bovine papillomavirus type 1 regulatory protein E2; this interaction stimulates the recruitment of E2 onto mitotic chromosomes.</text>
</comment>
<comment type="interaction">
    <interactant intactId="EBI-713068">
        <id>Q96FC9</id>
    </interactant>
    <interactant intactId="EBI-750341">
        <id>Q9BT04</id>
        <label>FUZ</label>
    </interactant>
    <organismsDiffer>false</organismsDiffer>
    <experiments>2</experiments>
</comment>
<comment type="subcellular location">
    <subcellularLocation>
        <location evidence="6">Nucleus</location>
    </subcellularLocation>
    <subcellularLocation>
        <location evidence="6 16 21">Nucleus</location>
        <location evidence="6 16 21">Nucleolus</location>
    </subcellularLocation>
    <subcellularLocation>
        <location evidence="6">Cytoplasm</location>
        <location evidence="6">Cytoskeleton</location>
        <location evidence="6">Spindle pole</location>
    </subcellularLocation>
    <subcellularLocation>
        <location evidence="6">Midbody</location>
    </subcellularLocation>
    <subcellularLocation>
        <location evidence="6">Cytoplasm</location>
        <location evidence="6">Cytoskeleton</location>
        <location evidence="6">Microtubule organizing center</location>
        <location evidence="6">Centrosome</location>
    </subcellularLocation>
    <text evidence="6 16">During the early stages of mitosis, localizes to condensed chromatin and is released from the chromatin with progression to metaphase. Also localizes to the spindle poles throughout mitosis and at the midbody at later stages of mitosis (metaphase to telophase) (PubMed:17105772). In interphase, colocalizes with nucleolin in the nucleolus (PubMed:26089203).</text>
</comment>
<comment type="subcellular location">
    <subcellularLocation>
        <location evidence="7">Chromosome</location>
    </subcellularLocation>
    <text evidence="7">(Microbial infection) Colocalizes with bovine papillomavirus type 1 regulatory protein E2 on mitotic chromosomes at early stages of mitosis.</text>
</comment>
<comment type="alternative products">
    <event type="alternative splicing"/>
    <isoform>
        <id>Q96FC9-1</id>
        <name>1</name>
        <sequence type="displayed"/>
    </isoform>
    <isoform>
        <id>Q96FC9-2</id>
        <name>2</name>
        <sequence type="described" ref="VSP_016864 VSP_016865"/>
    </isoform>
    <isoform>
        <id>Q96FC9-3</id>
        <name>3</name>
        <sequence type="described" ref="VSP_016860 VSP_016864 VSP_016865"/>
    </isoform>
    <isoform>
        <id>Q96FC9-4</id>
        <name>4</name>
        <sequence type="described" ref="VSP_016863 VSP_016864 VSP_016865"/>
    </isoform>
    <isoform>
        <id>Q96FC9-5</id>
        <name>5</name>
        <sequence type="described" ref="VSP_016861 VSP_016862"/>
    </isoform>
</comment>
<comment type="tissue specificity">
    <text evidence="14 20 21">Expressed in melanoma cells. Not detected in epidermal melanocytes of normal skin (at protein level) (PubMed:23116066). Highly expressed in spleen, B-cells, thymus, testis, ovary, small intestine and pancreas (PubMed:9013641). Very low expression seen in brain (PubMed:9013641). Expressed in dividing cells and/or cells undergoing high levels of recombination (PubMed:9013641). No expression detected in cells signaled to terminally differentiate (PubMed:9013641). Expressed weakly in keratinocytes (PubMed:8798685).</text>
</comment>
<comment type="induction">
    <text evidence="14 16 20">Up-regulated by serum (at protein level) (PubMed:26089203). Up-regulated by fibroblast growth factor FGF7 (PubMed:8798685). Expressed in keratinocyte growth factor-stimulated cells but not in EGF and IL1-beta-treated keratinocytes (PubMed:8798685). Up-regulated with progression from noninvasive to invasive melanoma (PubMed:23116066).</text>
</comment>
<comment type="disease" evidence="10 13 16">
    <disease id="DI-02764">
        <name>Warsaw breakage syndrome</name>
        <acronym>WBRS</acronym>
        <description>A syndrome characterized by severe microcephaly, pre- and postnatal growth retardation, facial dysmorphism and abnormal skin pigmentation. Additional features include high arched palate, coloboma of the right optic disk, deafness, ventricular septal defect, toes and fingers abnormalities. At cellular level, drug-induced chromosomal breakage, a feature of Fanconi anemia, and sister chromatid cohesion defects, a feature of Roberts syndrome, coexist.</description>
        <dbReference type="MIM" id="613398"/>
    </disease>
    <text>The disease is caused by variants affecting the gene represented in this entry.</text>
</comment>
<comment type="similarity">
    <text evidence="27">Belongs to the DEAD box helicase family. DEAH subfamily. DDX11/CHL1 sub-subfamily.</text>
</comment>
<comment type="sequence caution" evidence="27">
    <conflict type="erroneous initiation">
        <sequence resource="EMBL-CDS" id="CAA67895"/>
    </conflict>
    <text>Truncated N-terminus.</text>
</comment>
<comment type="sequence caution" evidence="27">
    <conflict type="frameshift">
        <sequence resource="EMBL-CDS" id="CAA67895"/>
    </conflict>
</comment>
<comment type="online information" name="DEAD/H (Asp-Glu-Ala-Asp/His) box helicase 11 (DDX11)">
    <link uri="https://databases.lovd.nl/shared/genes/DDX11"/>
    <text>Leiden Open Variation Database (LOVD)</text>
</comment>
<accession>Q96FC9</accession>
<accession>Q13333</accession>
<accession>Q86VQ4</accession>
<accession>Q86W62</accession>
<accession>Q92498</accession>
<accession>Q92770</accession>
<accession>Q92998</accession>
<accession>Q92999</accession>
<proteinExistence type="evidence at protein level"/>
<protein>
    <recommendedName>
        <fullName evidence="27">ATP-dependent DNA helicase DDX11</fullName>
        <ecNumber evidence="5 8 12">5.6.2.3</ecNumber>
    </recommendedName>
    <alternativeName>
        <fullName evidence="25">CHL1-related protein 1</fullName>
        <shortName evidence="25">hCHLR1</shortName>
    </alternativeName>
    <alternativeName>
        <fullName evidence="28">DEAD/H-box protein 11</fullName>
    </alternativeName>
    <alternativeName>
        <fullName evidence="27">DNA 5'-3' helicase DDX11</fullName>
    </alternativeName>
    <alternativeName>
        <fullName evidence="24">Keratinocyte growth factor-regulated gene 2 protein</fullName>
        <shortName evidence="24">KRG-2</shortName>
    </alternativeName>
</protein>
<gene>
    <name evidence="28" type="primary">DDX11</name>
    <name type="synonym">CHL1</name>
    <name evidence="25" type="synonym">CHLR1</name>
    <name evidence="24" type="synonym">KRG2</name>
</gene>
<name>DDX11_HUMAN</name>
<reference key="1">
    <citation type="journal article" date="1996" name="J. Biol. Chem.">
        <title>The human homologue of the yeast CHL1 gene is a novel keratinocyte growth factor regulated gene.</title>
        <authorList>
            <person name="Frank S."/>
            <person name="Werner S."/>
        </authorList>
    </citation>
    <scope>NUCLEOTIDE SEQUENCE [MRNA] (ISOFORM 4)</scope>
    <scope>TISSUE SPECIFICITY</scope>
    <scope>INDUCTION</scope>
    <scope>VARIANT SER-39</scope>
    <source>
        <tissue>Keratinocyte</tissue>
    </source>
</reference>
<reference key="2">
    <citation type="journal article" date="1997" name="J. Biol. Chem.">
        <title>Characterization of putative human homologues of the yeast chromosome transmission fidelity gene, CHL1.</title>
        <authorList>
            <person name="Amann J."/>
            <person name="Kidd V.J."/>
            <person name="Lahti J.M."/>
        </authorList>
    </citation>
    <scope>NUCLEOTIDE SEQUENCE [MRNA] (ISOFORM 2)</scope>
    <scope>FUNCTION</scope>
    <scope>SUBCELLULAR LOCATION</scope>
    <scope>TISSUE SPECIFICITY</scope>
    <scope>VARIANT GLU-567</scope>
</reference>
<reference key="3">
    <citation type="submission" date="1996-10" db="EMBL/GenBank/DDBJ databases">
        <title>Isolation and characterization of the human homologue of the yeast CHL1 gene.</title>
        <authorList>
            <person name="Ouellette M.M."/>
            <person name="Wright W.E."/>
            <person name="Shay J.W."/>
        </authorList>
    </citation>
    <scope>NUCLEOTIDE SEQUENCE [MRNA] (ISOFORMS 2 AND 5)</scope>
    <scope>VARIANTS GLU-567 AND MET-575</scope>
</reference>
<reference key="4">
    <citation type="journal article" date="2004" name="Genome Res.">
        <title>The status, quality, and expansion of the NIH full-length cDNA project: the Mammalian Gene Collection (MGC).</title>
        <authorList>
            <consortium name="The MGC Project Team"/>
        </authorList>
    </citation>
    <scope>NUCLEOTIDE SEQUENCE [LARGE SCALE MRNA] (ISOFORMS 1 AND 3)</scope>
    <source>
        <tissue>Testis</tissue>
        <tissue>Uterus</tissue>
    </source>
</reference>
<reference key="5">
    <citation type="journal article" date="2000" name="Nucleic Acids Res.">
        <title>Characterization of the enzymatic activity of hChlR1, a novel human DNA helicase.</title>
        <authorList>
            <person name="Hirota Y."/>
            <person name="Lahti J.M."/>
        </authorList>
    </citation>
    <scope>FUNCTION AS A 5'-3' DNA HELICASE</scope>
    <scope>FUNCTION AS AN ATPASE</scope>
    <scope>CATALYTIC ACTIVITY</scope>
    <scope>COFACTOR</scope>
    <scope>BIOPHYSICOCHEMICAL PROPERTIES</scope>
    <scope>MUTAGENESIS OF LYS-50</scope>
</reference>
<reference key="6">
    <citation type="journal article" date="2006" name="J. Cell Sci.">
        <title>The DNA helicase ChlR1 is required for sister chromatid cohesion in mammalian cells.</title>
        <authorList>
            <person name="Parish J.L."/>
            <person name="Rosa J."/>
            <person name="Wang X."/>
            <person name="Lahti J.M."/>
            <person name="Doxsey S.J."/>
            <person name="Androphy E.J."/>
        </authorList>
    </citation>
    <scope>FUNCTION</scope>
    <scope>SUBCELLULAR LOCATION</scope>
    <scope>ASSOCIATION WITH A COHESIN COMPLEX</scope>
    <scope>INTERACTION WITH RAD21; SMC1 PROTEINS AND SMC3</scope>
</reference>
<reference key="7">
    <citation type="journal article" date="2006" name="Mol. Cell">
        <title>ChlR1 is required for loading papillomavirus E2 onto mitotic chromosomes and viral genome maintenance.</title>
        <authorList>
            <person name="Parish J.L."/>
            <person name="Bean A.M."/>
            <person name="Park R.B."/>
            <person name="Androphy E.J."/>
        </authorList>
    </citation>
    <scope>FUNCTION (MICROBIAL INFECTION)</scope>
    <scope>INTERACTION WITH BOVINE PAPILLOMAVIRUS TYPE 1 REGULATORY PROTEIN E2 (MICROBIAL INFECTION)</scope>
    <scope>SUBCELLULAR LOCATION (MICROBIAL INFECTION)</scope>
</reference>
<reference key="8">
    <citation type="journal article" date="2008" name="J. Biol. Chem.">
        <title>Studies with the human cohesin establishment factor, ChlR1. Association of ChlR1 with Ctf18-RFC and Fen1.</title>
        <authorList>
            <person name="Farina A."/>
            <person name="Shin J.H."/>
            <person name="Kim D.H."/>
            <person name="Bermudez V.P."/>
            <person name="Kelman Z."/>
            <person name="Seo Y.S."/>
            <person name="Hurwitz J."/>
        </authorList>
    </citation>
    <scope>FUNCTION</scope>
    <scope>CATALYTIC ACTIVITY</scope>
    <scope>ACTIVITY REGULATION</scope>
    <scope>ASSOCIATES WITH THE CTF18-RFC COMPLEX</scope>
    <scope>INTERACTION WITH CHTF18; DSCC1; FEN1; PCNA AND RFC2</scope>
    <scope>MUTAGENESIS OF LYS-50</scope>
</reference>
<reference key="9">
    <citation type="journal article" date="2008" name="Proc. Natl. Acad. Sci. U.S.A.">
        <title>A quantitative atlas of mitotic phosphorylation.</title>
        <authorList>
            <person name="Dephoure N."/>
            <person name="Zhou C."/>
            <person name="Villen J."/>
            <person name="Beausoleil S.A."/>
            <person name="Bakalarski C.E."/>
            <person name="Elledge S.J."/>
            <person name="Gygi S.P."/>
        </authorList>
    </citation>
    <scope>IDENTIFICATION BY MASS SPECTROMETRY [LARGE SCALE ANALYSIS]</scope>
    <source>
        <tissue>Cervix carcinoma</tissue>
    </source>
</reference>
<reference key="10">
    <citation type="journal article" date="2010" name="Am. J. Hum. Genet.">
        <title>Warsaw breakage syndrome, a cohesinopathy associated with mutations in the XPD helicase family member DDX11/ChlR1.</title>
        <authorList>
            <person name="van der Lelij P."/>
            <person name="Chrzanowska K.H."/>
            <person name="Godthelp B.C."/>
            <person name="Rooimans M.A."/>
            <person name="Oostra A.B."/>
            <person name="Stumm M."/>
            <person name="Zdzienicka M.Z."/>
            <person name="Joenje H."/>
            <person name="de Winter J.P."/>
        </authorList>
    </citation>
    <scope>INVOLVEMENT IN WBRS</scope>
</reference>
<reference key="11">
    <citation type="journal article" date="2010" name="J. Cell Sci.">
        <title>Human Timeless and Tipin stabilize replication forks and facilitate sister-chromatid cohesion.</title>
        <authorList>
            <person name="Leman A.R."/>
            <person name="Noguchi C."/>
            <person name="Lee C.Y."/>
            <person name="Noguchi E."/>
        </authorList>
    </citation>
    <scope>FUNCTION</scope>
    <scope>INTERACTION WITH TIMELESS</scope>
</reference>
<reference key="12">
    <citation type="journal article" date="2011" name="BMC Syst. Biol.">
        <title>Initial characterization of the human central proteome.</title>
        <authorList>
            <person name="Burkard T.R."/>
            <person name="Planyavsky M."/>
            <person name="Kaupe I."/>
            <person name="Breitwieser F.P."/>
            <person name="Buerckstuemmer T."/>
            <person name="Bennett K.L."/>
            <person name="Superti-Furga G."/>
            <person name="Colinge J."/>
        </authorList>
    </citation>
    <scope>IDENTIFICATION BY MASS SPECTROMETRY [LARGE SCALE ANALYSIS]</scope>
</reference>
<reference key="13">
    <citation type="journal article" date="2011" name="Exp. Cell Res.">
        <title>Mammalian ChlR1 has a role in heterochromatin organization.</title>
        <authorList>
            <person name="Inoue A."/>
            <person name="Hyle J."/>
            <person name="Lechner M.S."/>
            <person name="Lahti J.M."/>
        </authorList>
    </citation>
    <scope>FUNCTION</scope>
</reference>
<reference key="14">
    <citation type="journal article" date="2012" name="J. Biol. Chem.">
        <title>Biochemical characterization of Warsaw breakage syndrome helicase.</title>
        <authorList>
            <person name="Wu Y."/>
            <person name="Sommers J.A."/>
            <person name="Khan I."/>
            <person name="de Winter J.P."/>
            <person name="Brosh R.M. Jr."/>
        </authorList>
    </citation>
    <scope>FUNCTION</scope>
    <scope>CATALYTIC ACTIVITY</scope>
    <scope>BIOPHYSICOCHEMICAL PROPERTIES</scope>
    <scope>DNA-BINDING</scope>
    <scope>MUTAGENESIS OF LYS-50 AND LYS-897</scope>
</reference>
<reference key="15">
    <citation type="journal article" date="2012" name="Mol. Cancer">
        <title>The DEAD/DEAH box helicase, DDX11, is essential for the survival of advanced melanomas.</title>
        <authorList>
            <person name="Bhattacharya C."/>
            <person name="Wang X."/>
            <person name="Becker D."/>
        </authorList>
    </citation>
    <scope>FUNCTION</scope>
    <scope>INDUCTION</scope>
    <scope>TISSUE SPECIFICITY</scope>
</reference>
<reference key="16">
    <citation type="journal article" date="2013" name="Exp. Cell Res.">
        <title>Roles of ChlR1 DNA helicase in replication recovery from DNA damage.</title>
        <authorList>
            <person name="Shah N."/>
            <person name="Inoue A."/>
            <person name="Woo Lee S."/>
            <person name="Beishline K."/>
            <person name="Lahti J.M."/>
            <person name="Noguchi E."/>
        </authorList>
    </citation>
    <scope>FUNCTION</scope>
</reference>
<reference key="17">
    <citation type="journal article" date="2013" name="J. Proteome Res.">
        <title>Toward a comprehensive characterization of a human cancer cell phosphoproteome.</title>
        <authorList>
            <person name="Zhou H."/>
            <person name="Di Palma S."/>
            <person name="Preisinger C."/>
            <person name="Peng M."/>
            <person name="Polat A.N."/>
            <person name="Heck A.J."/>
            <person name="Mohammed S."/>
        </authorList>
    </citation>
    <scope>PHOSPHORYLATION [LARGE SCALE ANALYSIS] AT SER-262</scope>
    <scope>IDENTIFICATION BY MASS SPECTROMETRY [LARGE SCALE ANALYSIS]</scope>
    <source>
        <tissue>Erythroleukemia</tissue>
    </source>
</reference>
<reference key="18">
    <citation type="journal article" date="2015" name="Hum. Mol. Genet.">
        <title>The Warsaw breakage syndrome-related protein DDX11 is required for ribosomal RNA synthesis and embryonic development.</title>
        <authorList>
            <person name="Sun X."/>
            <person name="Chen H."/>
            <person name="Deng Z."/>
            <person name="Hu B."/>
            <person name="Luo H."/>
            <person name="Zeng X."/>
            <person name="Han L."/>
            <person name="Cai G."/>
            <person name="Ma L."/>
        </authorList>
    </citation>
    <scope>FUNCTION</scope>
    <scope>CATALYTIC ACTIVITY</scope>
    <scope>INTERACTION WITH POLR1A AND UBTF</scope>
    <scope>SUBCELLULAR LOCATION</scope>
    <scope>INDUCTION</scope>
    <scope>VARIANT WBRS GLN-263</scope>
    <scope>CHARACTERIZATION OF VARIANT WBRS GLN-263</scope>
</reference>
<reference key="19">
    <citation type="journal article" date="2016" name="Mol. Cell">
        <title>A Long Noncoding RNA Regulates Sister Chromatid Cohesion.</title>
        <authorList>
            <person name="Marchese F.P."/>
            <person name="Grossi E."/>
            <person name="Marin-Bejar O."/>
            <person name="Bharti S.K."/>
            <person name="Raimondi I."/>
            <person name="Gonzalez J."/>
            <person name="Martinez-Herrera D.J."/>
            <person name="Athie A."/>
            <person name="Amadoz A."/>
            <person name="Brosh R.M. Jr."/>
            <person name="Huarte M."/>
        </authorList>
    </citation>
    <scope>FUNCTION</scope>
    <scope>CATALYTIC ACTIVITY</scope>
    <scope>ACTIVITY REGULATION</scope>
    <scope>CHROMATIN-BINDING</scope>
    <scope>RNA-BINDING</scope>
</reference>
<reference key="20">
    <citation type="journal article" date="2016" name="Nucleic Acids Res.">
        <title>Tim/Timeless, a member of the replication fork protection complex, operates with the Warsaw breakage syndrome DNA helicase DDX11 in the same fork recovery pathway.</title>
        <authorList>
            <person name="Cali F."/>
            <person name="Bharti S.K."/>
            <person name="Di Perna R."/>
            <person name="Brosh R.M. Jr."/>
            <person name="Pisani F.M."/>
        </authorList>
    </citation>
    <scope>FUNCTION</scope>
    <scope>INTERACTION WITH TIMELESS</scope>
</reference>
<reference key="21">
    <citation type="journal article" date="2020" name="EMBO J.">
        <title>Timeless couples G-quadruplex detection with processing by DDX11 helicase during DNA replication.</title>
        <authorList>
            <person name="Lerner L.K."/>
            <person name="Holzer S."/>
            <person name="Kilkenny M.L."/>
            <person name="Svikovic S."/>
            <person name="Murat P."/>
            <person name="Schiavone D."/>
            <person name="Eldridge C.B."/>
            <person name="Bittleston A."/>
            <person name="Maman J.D."/>
            <person name="Branzei D."/>
            <person name="Stott K."/>
            <person name="Pellegrini L."/>
            <person name="Sale J.E."/>
        </authorList>
    </citation>
    <scope>INTERACTION WITH TIMELESS</scope>
</reference>
<reference key="22">
    <citation type="journal article" date="2013" name="Hum. Mutat.">
        <title>Identification and biochemical characterization of a novel mutation in DDX11 causing warsaw breakage syndrome.</title>
        <authorList>
            <person name="Capo-Chichi J.M."/>
            <person name="Bharti S.K."/>
            <person name="Sommers J.A."/>
            <person name="Yammine T."/>
            <person name="Chouery E."/>
            <person name="Patry L."/>
            <person name="Rouleau G.A."/>
            <person name="Samuels M.E."/>
            <person name="Hamdan F.F."/>
            <person name="Michaud J.L."/>
            <person name="Brosh R.M. Jr."/>
            <person name="Megarbane A."/>
            <person name="Kibar Z."/>
        </authorList>
    </citation>
    <scope>VARIANT WBRS GLN-263</scope>
    <scope>CHARACTERIZATION OF VARIANT WBRS GLN-263</scope>
</reference>
<dbReference type="EC" id="5.6.2.3" evidence="5 8 12"/>
<dbReference type="EMBL" id="X99583">
    <property type="protein sequence ID" value="CAA67895.1"/>
    <property type="status" value="ALT_SEQ"/>
    <property type="molecule type" value="mRNA"/>
</dbReference>
<dbReference type="EMBL" id="U33833">
    <property type="protein sequence ID" value="AAB06962.1"/>
    <property type="molecule type" value="mRNA"/>
</dbReference>
<dbReference type="EMBL" id="U75967">
    <property type="protein sequence ID" value="AAB18749.1"/>
    <property type="molecule type" value="mRNA"/>
</dbReference>
<dbReference type="EMBL" id="U75968">
    <property type="protein sequence ID" value="AAB18750.1"/>
    <property type="molecule type" value="mRNA"/>
</dbReference>
<dbReference type="EMBL" id="BC050069">
    <property type="protein sequence ID" value="AAH50069.1"/>
    <property type="molecule type" value="mRNA"/>
</dbReference>
<dbReference type="EMBL" id="BC050522">
    <property type="protein sequence ID" value="AAH50522.1"/>
    <property type="molecule type" value="mRNA"/>
</dbReference>
<dbReference type="CCDS" id="CCDS41767.1">
    <molecule id="Q96FC9-2"/>
</dbReference>
<dbReference type="CCDS" id="CCDS44856.1">
    <molecule id="Q96FC9-1"/>
</dbReference>
<dbReference type="CCDS" id="CCDS58224.1">
    <molecule id="Q96FC9-3"/>
</dbReference>
<dbReference type="CCDS" id="CCDS8721.1">
    <molecule id="Q96FC9-4"/>
</dbReference>
<dbReference type="PIR" id="G02071">
    <property type="entry name" value="G02071"/>
</dbReference>
<dbReference type="RefSeq" id="NP_001244073.1">
    <molecule id="Q96FC9-1"/>
    <property type="nucleotide sequence ID" value="NM_001257144.2"/>
</dbReference>
<dbReference type="RefSeq" id="NP_001244074.1">
    <molecule id="Q96FC9-3"/>
    <property type="nucleotide sequence ID" value="NM_001257145.2"/>
</dbReference>
<dbReference type="RefSeq" id="NP_001400621.1">
    <molecule id="Q96FC9-2"/>
    <property type="nucleotide sequence ID" value="NM_001413692.1"/>
</dbReference>
<dbReference type="RefSeq" id="NP_001400622.1">
    <molecule id="Q96FC9-2"/>
    <property type="nucleotide sequence ID" value="NM_001413693.1"/>
</dbReference>
<dbReference type="RefSeq" id="NP_001400623.1">
    <molecule id="Q96FC9-2"/>
    <property type="nucleotide sequence ID" value="NM_001413694.1"/>
</dbReference>
<dbReference type="RefSeq" id="NP_001400624.1">
    <molecule id="Q96FC9-1"/>
    <property type="nucleotide sequence ID" value="NM_001413695.1"/>
</dbReference>
<dbReference type="RefSeq" id="NP_001400625.1">
    <molecule id="Q96FC9-1"/>
    <property type="nucleotide sequence ID" value="NM_001413696.1"/>
</dbReference>
<dbReference type="RefSeq" id="NP_001400626.1">
    <molecule id="Q96FC9-3"/>
    <property type="nucleotide sequence ID" value="NM_001413697.1"/>
</dbReference>
<dbReference type="RefSeq" id="NP_001400627.1">
    <molecule id="Q96FC9-3"/>
    <property type="nucleotide sequence ID" value="NM_001413698.1"/>
</dbReference>
<dbReference type="RefSeq" id="NP_004390.3">
    <molecule id="Q96FC9-4"/>
    <property type="nucleotide sequence ID" value="NM_004399.2"/>
</dbReference>
<dbReference type="RefSeq" id="NP_085911.2">
    <molecule id="Q96FC9-2"/>
    <property type="nucleotide sequence ID" value="NM_030653.4"/>
</dbReference>
<dbReference type="RefSeq" id="NP_689651.1">
    <molecule id="Q96FC9-1"/>
    <property type="nucleotide sequence ID" value="NM_152438.2"/>
</dbReference>
<dbReference type="RefSeq" id="XP_016874421.1">
    <property type="nucleotide sequence ID" value="XM_017018932.1"/>
</dbReference>
<dbReference type="BioGRID" id="108028">
    <property type="interactions" value="73"/>
</dbReference>
<dbReference type="CORUM" id="Q96FC9"/>
<dbReference type="FunCoup" id="Q96FC9">
    <property type="interactions" value="1944"/>
</dbReference>
<dbReference type="IntAct" id="Q96FC9">
    <property type="interactions" value="51"/>
</dbReference>
<dbReference type="STRING" id="9606.ENSP00000440402"/>
<dbReference type="iPTMnet" id="Q96FC9"/>
<dbReference type="PhosphoSitePlus" id="Q96FC9"/>
<dbReference type="BioMuta" id="DDX11"/>
<dbReference type="DMDM" id="74731686"/>
<dbReference type="jPOST" id="Q96FC9"/>
<dbReference type="MassIVE" id="Q96FC9"/>
<dbReference type="PaxDb" id="9606-ENSP00000440402"/>
<dbReference type="PeptideAtlas" id="Q96FC9"/>
<dbReference type="ProteomicsDB" id="76511">
    <molecule id="Q96FC9-1"/>
</dbReference>
<dbReference type="ProteomicsDB" id="76512">
    <molecule id="Q96FC9-2"/>
</dbReference>
<dbReference type="ProteomicsDB" id="76513">
    <molecule id="Q96FC9-3"/>
</dbReference>
<dbReference type="ProteomicsDB" id="76514">
    <molecule id="Q96FC9-4"/>
</dbReference>
<dbReference type="ProteomicsDB" id="76515">
    <molecule id="Q96FC9-5"/>
</dbReference>
<dbReference type="Pumba" id="Q96FC9"/>
<dbReference type="Antibodypedia" id="24573">
    <property type="antibodies" value="244 antibodies from 25 providers"/>
</dbReference>
<dbReference type="CPTC" id="Q96FC9">
    <property type="antibodies" value="1 antibody"/>
</dbReference>
<dbReference type="DNASU" id="1663"/>
<dbReference type="Ensembl" id="ENST00000228264.10">
    <molecule id="Q96FC9-3"/>
    <property type="protein sequence ID" value="ENSP00000228264.6"/>
    <property type="gene ID" value="ENSG00000013573.17"/>
</dbReference>
<dbReference type="Ensembl" id="ENST00000350437.8">
    <molecule id="Q96FC9-4"/>
    <property type="protein sequence ID" value="ENSP00000309965.5"/>
    <property type="gene ID" value="ENSG00000013573.17"/>
</dbReference>
<dbReference type="Ensembl" id="ENST00000435753.6">
    <molecule id="Q96FC9-5"/>
    <property type="protein sequence ID" value="ENSP00000406799.2"/>
    <property type="gene ID" value="ENSG00000013573.17"/>
</dbReference>
<dbReference type="Ensembl" id="ENST00000542838.6">
    <molecule id="Q96FC9-2"/>
    <property type="protein sequence ID" value="ENSP00000443426.1"/>
    <property type="gene ID" value="ENSG00000013573.17"/>
</dbReference>
<dbReference type="Ensembl" id="ENST00000545668.5">
    <molecule id="Q96FC9-1"/>
    <property type="protein sequence ID" value="ENSP00000440402.1"/>
    <property type="gene ID" value="ENSG00000013573.17"/>
</dbReference>
<dbReference type="GeneID" id="1663"/>
<dbReference type="KEGG" id="hsa:1663"/>
<dbReference type="MANE-Select" id="ENST00000542838.6">
    <molecule id="Q96FC9-2"/>
    <property type="protein sequence ID" value="ENSP00000443426.1"/>
    <property type="RefSeq nucleotide sequence ID" value="NM_030653.4"/>
    <property type="RefSeq protein sequence ID" value="NP_085911.2"/>
</dbReference>
<dbReference type="UCSC" id="uc001rjr.2">
    <molecule id="Q96FC9-1"/>
    <property type="organism name" value="human"/>
</dbReference>
<dbReference type="AGR" id="HGNC:2736"/>
<dbReference type="CTD" id="1663"/>
<dbReference type="DisGeNET" id="1663"/>
<dbReference type="GeneCards" id="DDX11"/>
<dbReference type="GeneReviews" id="DDX11"/>
<dbReference type="HGNC" id="HGNC:2736">
    <property type="gene designation" value="DDX11"/>
</dbReference>
<dbReference type="HPA" id="ENSG00000013573">
    <property type="expression patterns" value="Low tissue specificity"/>
</dbReference>
<dbReference type="MalaCards" id="DDX11"/>
<dbReference type="MIM" id="601150">
    <property type="type" value="gene"/>
</dbReference>
<dbReference type="MIM" id="613398">
    <property type="type" value="phenotype"/>
</dbReference>
<dbReference type="neXtProt" id="NX_Q96FC9"/>
<dbReference type="OpenTargets" id="ENSG00000013573"/>
<dbReference type="Orphanet" id="280558">
    <property type="disease" value="Warsaw breakage syndrome"/>
</dbReference>
<dbReference type="PharmGKB" id="PA27201"/>
<dbReference type="VEuPathDB" id="HostDB:ENSG00000013573"/>
<dbReference type="eggNOG" id="KOG1133">
    <property type="taxonomic scope" value="Eukaryota"/>
</dbReference>
<dbReference type="GeneTree" id="ENSGT00950000182970"/>
<dbReference type="HOGENOM" id="CLU_006515_2_1_1"/>
<dbReference type="InParanoid" id="Q96FC9"/>
<dbReference type="OMA" id="QTHQFRD"/>
<dbReference type="OrthoDB" id="267079at2759"/>
<dbReference type="PAN-GO" id="Q96FC9">
    <property type="GO annotations" value="3 GO annotations based on evolutionary models"/>
</dbReference>
<dbReference type="PhylomeDB" id="Q96FC9"/>
<dbReference type="TreeFam" id="TF300435"/>
<dbReference type="BRENDA" id="3.6.4.12">
    <property type="organism ID" value="2681"/>
</dbReference>
<dbReference type="BRENDA" id="3.6.4.13">
    <property type="organism ID" value="2681"/>
</dbReference>
<dbReference type="PathwayCommons" id="Q96FC9"/>
<dbReference type="Reactome" id="R-HSA-381038">
    <property type="pathway name" value="XBP1(S) activates chaperone genes"/>
</dbReference>
<dbReference type="SignaLink" id="Q96FC9"/>
<dbReference type="BioGRID-ORCS" id="1663">
    <property type="hits" value="569 hits in 1127 CRISPR screens"/>
</dbReference>
<dbReference type="CD-CODE" id="8C2F96ED">
    <property type="entry name" value="Centrosome"/>
</dbReference>
<dbReference type="CD-CODE" id="91857CE7">
    <property type="entry name" value="Nucleolus"/>
</dbReference>
<dbReference type="GeneWiki" id="DDX11"/>
<dbReference type="GenomeRNAi" id="1663"/>
<dbReference type="Pharos" id="Q96FC9">
    <property type="development level" value="Tbio"/>
</dbReference>
<dbReference type="PRO" id="PR:Q96FC9"/>
<dbReference type="Proteomes" id="UP000005640">
    <property type="component" value="Chromosome 12"/>
</dbReference>
<dbReference type="RNAct" id="Q96FC9">
    <property type="molecule type" value="protein"/>
</dbReference>
<dbReference type="Bgee" id="ENSG00000013573">
    <property type="expression patterns" value="Expressed in lower esophagus mucosa and 131 other cell types or tissues"/>
</dbReference>
<dbReference type="ExpressionAtlas" id="Q96FC9">
    <property type="expression patterns" value="baseline and differential"/>
</dbReference>
<dbReference type="GO" id="GO:0005813">
    <property type="term" value="C:centrosome"/>
    <property type="evidence" value="ECO:0000314"/>
    <property type="project" value="UniProtKB"/>
</dbReference>
<dbReference type="GO" id="GO:0000785">
    <property type="term" value="C:chromatin"/>
    <property type="evidence" value="ECO:0000314"/>
    <property type="project" value="UniProtKB"/>
</dbReference>
<dbReference type="GO" id="GO:0005737">
    <property type="term" value="C:cytoplasm"/>
    <property type="evidence" value="ECO:0007669"/>
    <property type="project" value="UniProtKB-KW"/>
</dbReference>
<dbReference type="GO" id="GO:0070062">
    <property type="term" value="C:extracellular exosome"/>
    <property type="evidence" value="ECO:0007005"/>
    <property type="project" value="UniProtKB"/>
</dbReference>
<dbReference type="GO" id="GO:0030496">
    <property type="term" value="C:midbody"/>
    <property type="evidence" value="ECO:0000314"/>
    <property type="project" value="UniProtKB"/>
</dbReference>
<dbReference type="GO" id="GO:0005730">
    <property type="term" value="C:nucleolus"/>
    <property type="evidence" value="ECO:0000314"/>
    <property type="project" value="HPA"/>
</dbReference>
<dbReference type="GO" id="GO:0005654">
    <property type="term" value="C:nucleoplasm"/>
    <property type="evidence" value="ECO:0000314"/>
    <property type="project" value="HPA"/>
</dbReference>
<dbReference type="GO" id="GO:0000922">
    <property type="term" value="C:spindle pole"/>
    <property type="evidence" value="ECO:0000314"/>
    <property type="project" value="UniProtKB"/>
</dbReference>
<dbReference type="GO" id="GO:0051539">
    <property type="term" value="F:4 iron, 4 sulfur cluster binding"/>
    <property type="evidence" value="ECO:0007669"/>
    <property type="project" value="UniProtKB-KW"/>
</dbReference>
<dbReference type="GO" id="GO:0043139">
    <property type="term" value="F:5'-3' DNA helicase activity"/>
    <property type="evidence" value="ECO:0000314"/>
    <property type="project" value="GO_Central"/>
</dbReference>
<dbReference type="GO" id="GO:0005524">
    <property type="term" value="F:ATP binding"/>
    <property type="evidence" value="ECO:0007669"/>
    <property type="project" value="UniProtKB-KW"/>
</dbReference>
<dbReference type="GO" id="GO:0016887">
    <property type="term" value="F:ATP hydrolysis activity"/>
    <property type="evidence" value="ECO:0007669"/>
    <property type="project" value="RHEA"/>
</dbReference>
<dbReference type="GO" id="GO:0008094">
    <property type="term" value="F:ATP-dependent activity, acting on DNA"/>
    <property type="evidence" value="ECO:0000314"/>
    <property type="project" value="UniProtKB"/>
</dbReference>
<dbReference type="GO" id="GO:0008186">
    <property type="term" value="F:ATP-dependent activity, acting on RNA"/>
    <property type="evidence" value="ECO:0000314"/>
    <property type="project" value="UniProtKB"/>
</dbReference>
<dbReference type="GO" id="GO:0140640">
    <property type="term" value="F:catalytic activity, acting on a nucleic acid"/>
    <property type="evidence" value="ECO:0000314"/>
    <property type="project" value="UniProtKB"/>
</dbReference>
<dbReference type="GO" id="GO:0003682">
    <property type="term" value="F:chromatin binding"/>
    <property type="evidence" value="ECO:0000314"/>
    <property type="project" value="UniProtKB"/>
</dbReference>
<dbReference type="GO" id="GO:0003677">
    <property type="term" value="F:DNA binding"/>
    <property type="evidence" value="ECO:0000314"/>
    <property type="project" value="UniProtKB"/>
</dbReference>
<dbReference type="GO" id="GO:0003678">
    <property type="term" value="F:DNA helicase activity"/>
    <property type="evidence" value="ECO:0000314"/>
    <property type="project" value="UniProtKB"/>
</dbReference>
<dbReference type="GO" id="GO:0003688">
    <property type="term" value="F:DNA replication origin binding"/>
    <property type="evidence" value="ECO:0000315"/>
    <property type="project" value="UniProtKB"/>
</dbReference>
<dbReference type="GO" id="GO:0003690">
    <property type="term" value="F:double-stranded DNA binding"/>
    <property type="evidence" value="ECO:0000314"/>
    <property type="project" value="UniProtKB"/>
</dbReference>
<dbReference type="GO" id="GO:0051880">
    <property type="term" value="F:G-quadruplex DNA binding"/>
    <property type="evidence" value="ECO:0000314"/>
    <property type="project" value="UniProtKB"/>
</dbReference>
<dbReference type="GO" id="GO:0004386">
    <property type="term" value="F:helicase activity"/>
    <property type="evidence" value="ECO:0000314"/>
    <property type="project" value="UniProtKB"/>
</dbReference>
<dbReference type="GO" id="GO:0046872">
    <property type="term" value="F:metal ion binding"/>
    <property type="evidence" value="ECO:0007669"/>
    <property type="project" value="UniProtKB-KW"/>
</dbReference>
<dbReference type="GO" id="GO:0003697">
    <property type="term" value="F:single-stranded DNA binding"/>
    <property type="evidence" value="ECO:0000314"/>
    <property type="project" value="UniProtKB"/>
</dbReference>
<dbReference type="GO" id="GO:0003727">
    <property type="term" value="F:single-stranded RNA binding"/>
    <property type="evidence" value="ECO:0000314"/>
    <property type="project" value="UniProtKB"/>
</dbReference>
<dbReference type="GO" id="GO:0045142">
    <property type="term" value="F:triplex DNA binding"/>
    <property type="evidence" value="ECO:0000314"/>
    <property type="project" value="UniProtKB"/>
</dbReference>
<dbReference type="GO" id="GO:1904976">
    <property type="term" value="P:cellular response to bleomycin"/>
    <property type="evidence" value="ECO:0000315"/>
    <property type="project" value="UniProtKB"/>
</dbReference>
<dbReference type="GO" id="GO:0072719">
    <property type="term" value="P:cellular response to cisplatin"/>
    <property type="evidence" value="ECO:0000315"/>
    <property type="project" value="UniProtKB"/>
</dbReference>
<dbReference type="GO" id="GO:0072711">
    <property type="term" value="P:cellular response to hydroxyurea"/>
    <property type="evidence" value="ECO:0000315"/>
    <property type="project" value="UniProtKB"/>
</dbReference>
<dbReference type="GO" id="GO:0006974">
    <property type="term" value="P:DNA damage response"/>
    <property type="evidence" value="ECO:0000315"/>
    <property type="project" value="UniProtKB"/>
</dbReference>
<dbReference type="GO" id="GO:0006281">
    <property type="term" value="P:DNA repair"/>
    <property type="evidence" value="ECO:0007669"/>
    <property type="project" value="UniProtKB-KW"/>
</dbReference>
<dbReference type="GO" id="GO:0034085">
    <property type="term" value="P:establishment of sister chromatid cohesion"/>
    <property type="evidence" value="ECO:0000318"/>
    <property type="project" value="GO_Central"/>
</dbReference>
<dbReference type="GO" id="GO:0032091">
    <property type="term" value="P:negative regulation of protein binding"/>
    <property type="evidence" value="ECO:0000315"/>
    <property type="project" value="UniProtKB"/>
</dbReference>
<dbReference type="GO" id="GO:1990700">
    <property type="term" value="P:nucleolar chromatin organization"/>
    <property type="evidence" value="ECO:0000315"/>
    <property type="project" value="UniProtKB"/>
</dbReference>
<dbReference type="GO" id="GO:0035563">
    <property type="term" value="P:positive regulation of chromatin binding"/>
    <property type="evidence" value="ECO:0000314"/>
    <property type="project" value="UniProtKB"/>
</dbReference>
<dbReference type="GO" id="GO:2000781">
    <property type="term" value="P:positive regulation of double-strand break repair"/>
    <property type="evidence" value="ECO:0000315"/>
    <property type="project" value="UniProtKB"/>
</dbReference>
<dbReference type="GO" id="GO:0045876">
    <property type="term" value="P:positive regulation of sister chromatid cohesion"/>
    <property type="evidence" value="ECO:0000315"/>
    <property type="project" value="UniProtKB"/>
</dbReference>
<dbReference type="GO" id="GO:1901838">
    <property type="term" value="P:positive regulation of transcription of nucleolar large rRNA by RNA polymerase I"/>
    <property type="evidence" value="ECO:0000315"/>
    <property type="project" value="UniProtKB"/>
</dbReference>
<dbReference type="GO" id="GO:0031297">
    <property type="term" value="P:replication fork processing"/>
    <property type="evidence" value="ECO:0000315"/>
    <property type="project" value="UniProtKB"/>
</dbReference>
<dbReference type="GO" id="GO:0007062">
    <property type="term" value="P:sister chromatid cohesion"/>
    <property type="evidence" value="ECO:0000314"/>
    <property type="project" value="UniProtKB"/>
</dbReference>
<dbReference type="FunFam" id="3.40.50.300:FF:001050">
    <property type="entry name" value="ATP-dependent DNA helicase DDX11"/>
    <property type="match status" value="1"/>
</dbReference>
<dbReference type="FunFam" id="3.40.50.300:FF:003220">
    <property type="entry name" value="ATP-dependent DNA helicase DDX11"/>
    <property type="match status" value="1"/>
</dbReference>
<dbReference type="Gene3D" id="3.40.50.300">
    <property type="entry name" value="P-loop containing nucleotide triphosphate hydrolases"/>
    <property type="match status" value="3"/>
</dbReference>
<dbReference type="InterPro" id="IPR006555">
    <property type="entry name" value="ATP-dep_Helicase_C"/>
</dbReference>
<dbReference type="InterPro" id="IPR045028">
    <property type="entry name" value="DinG/Rad3-like"/>
</dbReference>
<dbReference type="InterPro" id="IPR014013">
    <property type="entry name" value="Helic_SF1/SF2_ATP-bd_DinG/Rad3"/>
</dbReference>
<dbReference type="InterPro" id="IPR006554">
    <property type="entry name" value="Helicase-like_DEXD_c2"/>
</dbReference>
<dbReference type="InterPro" id="IPR027417">
    <property type="entry name" value="P-loop_NTPase"/>
</dbReference>
<dbReference type="InterPro" id="IPR010614">
    <property type="entry name" value="RAD3-like_helicase_DEAD"/>
</dbReference>
<dbReference type="InterPro" id="IPR013020">
    <property type="entry name" value="Rad3/Chl1-like"/>
</dbReference>
<dbReference type="NCBIfam" id="TIGR00604">
    <property type="entry name" value="rad3"/>
    <property type="match status" value="1"/>
</dbReference>
<dbReference type="PANTHER" id="PTHR11472:SF41">
    <property type="entry name" value="ATP-DEPENDENT DNA HELICASE DDX11-RELATED"/>
    <property type="match status" value="1"/>
</dbReference>
<dbReference type="PANTHER" id="PTHR11472">
    <property type="entry name" value="DNA REPAIR DEAD HELICASE RAD3/XP-D SUBFAMILY MEMBER"/>
    <property type="match status" value="1"/>
</dbReference>
<dbReference type="Pfam" id="PF06733">
    <property type="entry name" value="DEAD_2"/>
    <property type="match status" value="1"/>
</dbReference>
<dbReference type="Pfam" id="PF13307">
    <property type="entry name" value="Helicase_C_2"/>
    <property type="match status" value="1"/>
</dbReference>
<dbReference type="SMART" id="SM00488">
    <property type="entry name" value="DEXDc2"/>
    <property type="match status" value="1"/>
</dbReference>
<dbReference type="SMART" id="SM00491">
    <property type="entry name" value="HELICc2"/>
    <property type="match status" value="1"/>
</dbReference>
<dbReference type="SUPFAM" id="SSF52540">
    <property type="entry name" value="P-loop containing nucleoside triphosphate hydrolases"/>
    <property type="match status" value="1"/>
</dbReference>
<dbReference type="PROSITE" id="PS51193">
    <property type="entry name" value="HELICASE_ATP_BIND_2"/>
    <property type="match status" value="1"/>
</dbReference>
<keyword id="KW-0004">4Fe-4S</keyword>
<keyword id="KW-0010">Activator</keyword>
<keyword id="KW-0025">Alternative splicing</keyword>
<keyword id="KW-0067">ATP-binding</keyword>
<keyword id="KW-0158">Chromosome</keyword>
<keyword id="KW-0963">Cytoplasm</keyword>
<keyword id="KW-0206">Cytoskeleton</keyword>
<keyword id="KW-0217">Developmental protein</keyword>
<keyword id="KW-0225">Disease variant</keyword>
<keyword id="KW-0227">DNA damage</keyword>
<keyword id="KW-0234">DNA repair</keyword>
<keyword id="KW-0235">DNA replication</keyword>
<keyword id="KW-0238">DNA-binding</keyword>
<keyword id="KW-0347">Helicase</keyword>
<keyword id="KW-0945">Host-virus interaction</keyword>
<keyword id="KW-0378">Hydrolase</keyword>
<keyword id="KW-0408">Iron</keyword>
<keyword id="KW-0411">Iron-sulfur</keyword>
<keyword id="KW-0413">Isomerase</keyword>
<keyword id="KW-0479">Metal-binding</keyword>
<keyword id="KW-0547">Nucleotide-binding</keyword>
<keyword id="KW-0539">Nucleus</keyword>
<keyword id="KW-0597">Phosphoprotein</keyword>
<keyword id="KW-1267">Proteomics identification</keyword>
<keyword id="KW-1185">Reference proteome</keyword>
<keyword id="KW-0694">RNA-binding</keyword>
<keyword id="KW-0804">Transcription</keyword>
<keyword id="KW-0805">Transcription regulation</keyword>
<organism>
    <name type="scientific">Homo sapiens</name>
    <name type="common">Human</name>
    <dbReference type="NCBI Taxonomy" id="9606"/>
    <lineage>
        <taxon>Eukaryota</taxon>
        <taxon>Metazoa</taxon>
        <taxon>Chordata</taxon>
        <taxon>Craniata</taxon>
        <taxon>Vertebrata</taxon>
        <taxon>Euteleostomi</taxon>
        <taxon>Mammalia</taxon>
        <taxon>Eutheria</taxon>
        <taxon>Euarchontoglires</taxon>
        <taxon>Primates</taxon>
        <taxon>Haplorrhini</taxon>
        <taxon>Catarrhini</taxon>
        <taxon>Hominidae</taxon>
        <taxon>Homo</taxon>
    </lineage>
</organism>
<feature type="chain" id="PRO_0000055136" description="ATP-dependent DNA helicase DDX11">
    <location>
        <begin position="1"/>
        <end position="970"/>
    </location>
</feature>
<feature type="domain" description="Helicase ATP-binding" evidence="3">
    <location>
        <begin position="9"/>
        <end position="445"/>
    </location>
</feature>
<feature type="region of interest" description="Disordered" evidence="4">
    <location>
        <begin position="289"/>
        <end position="312"/>
    </location>
</feature>
<feature type="region of interest" description="Disordered" evidence="4">
    <location>
        <begin position="818"/>
        <end position="849"/>
    </location>
</feature>
<feature type="short sequence motif" description="DEAH box">
    <location>
        <begin position="393"/>
        <end position="396"/>
    </location>
</feature>
<feature type="compositionally biased region" description="Basic and acidic residues" evidence="4">
    <location>
        <begin position="289"/>
        <end position="304"/>
    </location>
</feature>
<feature type="binding site" evidence="3">
    <location>
        <begin position="44"/>
        <end position="51"/>
    </location>
    <ligand>
        <name>ATP</name>
        <dbReference type="ChEBI" id="CHEBI:30616"/>
    </ligand>
</feature>
<feature type="binding site" evidence="1">
    <location>
        <position position="267"/>
    </location>
    <ligand>
        <name>[4Fe-4S] cluster</name>
        <dbReference type="ChEBI" id="CHEBI:49883"/>
    </ligand>
</feature>
<feature type="binding site" evidence="1">
    <location>
        <position position="285"/>
    </location>
    <ligand>
        <name>[4Fe-4S] cluster</name>
        <dbReference type="ChEBI" id="CHEBI:49883"/>
    </ligand>
</feature>
<feature type="binding site" evidence="1">
    <location>
        <position position="315"/>
    </location>
    <ligand>
        <name>[4Fe-4S] cluster</name>
        <dbReference type="ChEBI" id="CHEBI:49883"/>
    </ligand>
</feature>
<feature type="binding site" evidence="1">
    <location>
        <position position="350"/>
    </location>
    <ligand>
        <name>[4Fe-4S] cluster</name>
        <dbReference type="ChEBI" id="CHEBI:49883"/>
    </ligand>
</feature>
<feature type="modified residue" description="Phosphoserine" evidence="29">
    <location>
        <position position="262"/>
    </location>
</feature>
<feature type="splice variant" id="VSP_016860" description="In isoform 3." evidence="23">
    <location>
        <begin position="1"/>
        <end position="26"/>
    </location>
</feature>
<feature type="splice variant" id="VSP_016861" description="In isoform 5." evidence="26">
    <original>VDEDEDDLEEEHITKIYYCSRTHSQLAQFVHEVKKSPFGKDVRLVSLGSRQNLCVNEDVKSLGSVQLINDRCVDM</original>
    <variation>APSDATSSRHPPDASFPAALNFLQRTRPSSVLSEDLLMQRAVAKHPALLPWQMSSSPLRPGSEWMRMRMTWRKNT</variation>
    <location>
        <begin position="214"/>
        <end position="288"/>
    </location>
</feature>
<feature type="splice variant" id="VSP_016862" description="In isoform 5." evidence="26">
    <location>
        <begin position="289"/>
        <end position="970"/>
    </location>
</feature>
<feature type="splice variant" id="VSP_016863" description="In isoform 4." evidence="24">
    <location>
        <begin position="685"/>
        <end position="734"/>
    </location>
</feature>
<feature type="splice variant" id="VSP_016864" description="In isoform 2, isoform 3 and isoform 4." evidence="23 24 25 26">
    <original>SPRPGTPREGSGGEPVHEGRQPVHRQGHQAPEGFCQRSAPGPAICPAPCPGQAAGLDPSPCGGQSYLWPRHCCCAEVSPGEVGLFLM</original>
    <variation>PRAPGQAPPGKALVENLCMKAVNQSIGRAIRHQKDFASVVLLDQRYARPPVLAKLPAWIRARVEVKATFGPAIAAVQKFHREKSASS</variation>
    <location>
        <begin position="820"/>
        <end position="906"/>
    </location>
</feature>
<feature type="splice variant" id="VSP_016865" description="In isoform 2, isoform 3 and isoform 4." evidence="23 24 25 26">
    <location>
        <begin position="907"/>
        <end position="970"/>
    </location>
</feature>
<feature type="sequence variant" id="VAR_024808" evidence="20">
    <original>I</original>
    <variation>S</variation>
    <location>
        <position position="39"/>
    </location>
</feature>
<feature type="sequence variant" id="VAR_069099" description="In WBRS; impairs the helicase activity by perturbing its DNA binding and DNA-dependent ATPase activity; reduces binding to rDNA promoter and promotion of rDNA transcription; dbSNP:rs201968272." evidence="13 16">
    <original>R</original>
    <variation>Q</variation>
    <location>
        <position position="263"/>
    </location>
</feature>
<feature type="sequence variant" id="VAR_024809" description="In dbSNP:rs2075322." evidence="21 22">
    <original>Q</original>
    <variation>E</variation>
    <location>
        <position position="567"/>
    </location>
</feature>
<feature type="sequence variant" id="VAR_024810" description="In dbSNP:rs17857386." evidence="22">
    <original>T</original>
    <variation>M</variation>
    <location>
        <position position="575"/>
    </location>
</feature>
<feature type="sequence variant" id="VAR_052175" description="In dbSNP:rs1046457.">
    <original>R</original>
    <variation>H</variation>
    <location>
        <position position="856"/>
    </location>
</feature>
<feature type="sequence variant" id="VAR_052176" description="In dbSNP:rs3893679.">
    <original>C</original>
    <variation>R</variation>
    <location>
        <position position="864"/>
    </location>
</feature>
<feature type="sequence variant" id="VAR_052177" description="In dbSNP:rs1046458.">
    <original>C</original>
    <variation>R</variation>
    <location>
        <position position="951"/>
    </location>
</feature>
<feature type="sequence variant" id="VAR_052178" description="In dbSNP:rs14330.">
    <original>W</original>
    <variation>C</variation>
    <location>
        <position position="966"/>
    </location>
</feature>
<feature type="mutagenesis site" description="Loss of both DNA-dependent ATPase and ATP-dependent helicase activities, still binds ATP." evidence="5 8 12">
    <original>K</original>
    <variation>R</variation>
    <location>
        <position position="50"/>
    </location>
</feature>
<feature type="mutagenesis site" description="Loss of ATP-dependent DNA helicase and DNA-dependent ATPase activities, loss of DNA-binding, still binds ATP." evidence="12">
    <location>
        <position position="897"/>
    </location>
</feature>